<proteinExistence type="inferred from homology"/>
<organism>
    <name type="scientific">Salmonella arizonae (strain ATCC BAA-731 / CDC346-86 / RSK2980)</name>
    <dbReference type="NCBI Taxonomy" id="41514"/>
    <lineage>
        <taxon>Bacteria</taxon>
        <taxon>Pseudomonadati</taxon>
        <taxon>Pseudomonadota</taxon>
        <taxon>Gammaproteobacteria</taxon>
        <taxon>Enterobacterales</taxon>
        <taxon>Enterobacteriaceae</taxon>
        <taxon>Salmonella</taxon>
    </lineage>
</organism>
<evidence type="ECO:0000255" key="1">
    <source>
        <dbReference type="HAMAP-Rule" id="MF_00443"/>
    </source>
</evidence>
<protein>
    <recommendedName>
        <fullName evidence="1">Thiazole synthase</fullName>
        <ecNumber evidence="1">2.8.1.10</ecNumber>
    </recommendedName>
</protein>
<keyword id="KW-0963">Cytoplasm</keyword>
<keyword id="KW-1185">Reference proteome</keyword>
<keyword id="KW-0704">Schiff base</keyword>
<keyword id="KW-0784">Thiamine biosynthesis</keyword>
<keyword id="KW-0808">Transferase</keyword>
<accession>A9MHE0</accession>
<name>THIG_SALAR</name>
<comment type="function">
    <text evidence="1">Catalyzes the rearrangement of 1-deoxy-D-xylulose 5-phosphate (DXP) to produce the thiazole phosphate moiety of thiamine. Sulfur is provided by the thiocarboxylate moiety of the carrier protein ThiS. In vitro, sulfur can be provided by H(2)S.</text>
</comment>
<comment type="catalytic activity">
    <reaction evidence="1">
        <text>[ThiS sulfur-carrier protein]-C-terminal-Gly-aminoethanethioate + 2-iminoacetate + 1-deoxy-D-xylulose 5-phosphate = [ThiS sulfur-carrier protein]-C-terminal Gly-Gly + 2-[(2R,5Z)-2-carboxy-4-methylthiazol-5(2H)-ylidene]ethyl phosphate + 2 H2O + H(+)</text>
        <dbReference type="Rhea" id="RHEA:26297"/>
        <dbReference type="Rhea" id="RHEA-COMP:12909"/>
        <dbReference type="Rhea" id="RHEA-COMP:19908"/>
        <dbReference type="ChEBI" id="CHEBI:15377"/>
        <dbReference type="ChEBI" id="CHEBI:15378"/>
        <dbReference type="ChEBI" id="CHEBI:57792"/>
        <dbReference type="ChEBI" id="CHEBI:62899"/>
        <dbReference type="ChEBI" id="CHEBI:77846"/>
        <dbReference type="ChEBI" id="CHEBI:90778"/>
        <dbReference type="ChEBI" id="CHEBI:232372"/>
        <dbReference type="EC" id="2.8.1.10"/>
    </reaction>
</comment>
<comment type="pathway">
    <text evidence="1">Cofactor biosynthesis; thiamine diphosphate biosynthesis.</text>
</comment>
<comment type="subunit">
    <text evidence="1">Homotetramer. Forms heterodimers with either ThiH or ThiS.</text>
</comment>
<comment type="subcellular location">
    <subcellularLocation>
        <location evidence="1">Cytoplasm</location>
    </subcellularLocation>
</comment>
<comment type="similarity">
    <text evidence="1">Belongs to the ThiG family.</text>
</comment>
<gene>
    <name evidence="1" type="primary">thiG</name>
    <name type="ordered locus">SARI_03498</name>
</gene>
<feature type="chain" id="PRO_1000080875" description="Thiazole synthase">
    <location>
        <begin position="1"/>
        <end position="256"/>
    </location>
</feature>
<feature type="active site" description="Schiff-base intermediate with DXP" evidence="1">
    <location>
        <position position="95"/>
    </location>
</feature>
<feature type="binding site" evidence="1">
    <location>
        <position position="156"/>
    </location>
    <ligand>
        <name>1-deoxy-D-xylulose 5-phosphate</name>
        <dbReference type="ChEBI" id="CHEBI:57792"/>
    </ligand>
</feature>
<feature type="binding site" evidence="1">
    <location>
        <begin position="182"/>
        <end position="183"/>
    </location>
    <ligand>
        <name>1-deoxy-D-xylulose 5-phosphate</name>
        <dbReference type="ChEBI" id="CHEBI:57792"/>
    </ligand>
</feature>
<feature type="binding site" evidence="1">
    <location>
        <begin position="204"/>
        <end position="205"/>
    </location>
    <ligand>
        <name>1-deoxy-D-xylulose 5-phosphate</name>
        <dbReference type="ChEBI" id="CHEBI:57792"/>
    </ligand>
</feature>
<sequence>MLRIADKTFDSHLFTGTGKFASAQLMVDAIRASGSQLVTLAMKRVDLRKPNDAILSPLLEAGVTLLPNTSGAKTAEEAIFAAQLAREALGTHWLKLEIHPDARWLLPDPIETLKAAGELVKQGFVVLPYCGADPVLCKRLEEVGCAAVMPLGAPIGSNQGLETRAMLEIIIQQATVPVVVDAGIGVPSHATQALEMGADAVLVNTAIAVANDPVMMANAFRLAVEAGVLARQAVPGNRSVYASATSPLTGFLEVSA</sequence>
<dbReference type="EC" id="2.8.1.10" evidence="1"/>
<dbReference type="EMBL" id="CP000880">
    <property type="protein sequence ID" value="ABX23323.1"/>
    <property type="molecule type" value="Genomic_DNA"/>
</dbReference>
<dbReference type="SMR" id="A9MHE0"/>
<dbReference type="STRING" id="41514.SARI_03498"/>
<dbReference type="KEGG" id="ses:SARI_03498"/>
<dbReference type="HOGENOM" id="CLU_062233_1_0_6"/>
<dbReference type="UniPathway" id="UPA00060"/>
<dbReference type="Proteomes" id="UP000002084">
    <property type="component" value="Chromosome"/>
</dbReference>
<dbReference type="GO" id="GO:0005737">
    <property type="term" value="C:cytoplasm"/>
    <property type="evidence" value="ECO:0007669"/>
    <property type="project" value="UniProtKB-SubCell"/>
</dbReference>
<dbReference type="GO" id="GO:1990107">
    <property type="term" value="F:thiazole synthase activity"/>
    <property type="evidence" value="ECO:0007669"/>
    <property type="project" value="UniProtKB-EC"/>
</dbReference>
<dbReference type="GO" id="GO:0009229">
    <property type="term" value="P:thiamine diphosphate biosynthetic process"/>
    <property type="evidence" value="ECO:0007669"/>
    <property type="project" value="UniProtKB-UniRule"/>
</dbReference>
<dbReference type="CDD" id="cd04728">
    <property type="entry name" value="ThiG"/>
    <property type="match status" value="1"/>
</dbReference>
<dbReference type="FunFam" id="3.20.20.70:FF:000049">
    <property type="entry name" value="Thiazole synthase"/>
    <property type="match status" value="1"/>
</dbReference>
<dbReference type="Gene3D" id="3.20.20.70">
    <property type="entry name" value="Aldolase class I"/>
    <property type="match status" value="1"/>
</dbReference>
<dbReference type="HAMAP" id="MF_00443">
    <property type="entry name" value="ThiG"/>
    <property type="match status" value="1"/>
</dbReference>
<dbReference type="InterPro" id="IPR013785">
    <property type="entry name" value="Aldolase_TIM"/>
</dbReference>
<dbReference type="InterPro" id="IPR033983">
    <property type="entry name" value="Thiazole_synthase_ThiG"/>
</dbReference>
<dbReference type="InterPro" id="IPR008867">
    <property type="entry name" value="ThiG"/>
</dbReference>
<dbReference type="PANTHER" id="PTHR34266">
    <property type="entry name" value="THIAZOLE SYNTHASE"/>
    <property type="match status" value="1"/>
</dbReference>
<dbReference type="PANTHER" id="PTHR34266:SF2">
    <property type="entry name" value="THIAZOLE SYNTHASE"/>
    <property type="match status" value="1"/>
</dbReference>
<dbReference type="Pfam" id="PF05690">
    <property type="entry name" value="ThiG"/>
    <property type="match status" value="1"/>
</dbReference>
<dbReference type="SUPFAM" id="SSF110399">
    <property type="entry name" value="ThiG-like"/>
    <property type="match status" value="1"/>
</dbReference>
<reference key="1">
    <citation type="submission" date="2007-11" db="EMBL/GenBank/DDBJ databases">
        <authorList>
            <consortium name="The Salmonella enterica serovar Arizonae Genome Sequencing Project"/>
            <person name="McClelland M."/>
            <person name="Sanderson E.K."/>
            <person name="Porwollik S."/>
            <person name="Spieth J."/>
            <person name="Clifton W.S."/>
            <person name="Fulton R."/>
            <person name="Chunyan W."/>
            <person name="Wollam A."/>
            <person name="Shah N."/>
            <person name="Pepin K."/>
            <person name="Bhonagiri V."/>
            <person name="Nash W."/>
            <person name="Johnson M."/>
            <person name="Thiruvilangam P."/>
            <person name="Wilson R."/>
        </authorList>
    </citation>
    <scope>NUCLEOTIDE SEQUENCE [LARGE SCALE GENOMIC DNA]</scope>
    <source>
        <strain>ATCC BAA-731 / CDC346-86 / RSK2980</strain>
    </source>
</reference>